<gene>
    <name evidence="2" type="primary">nleG8</name>
    <name evidence="5" type="ORF">E2R62_17250</name>
</gene>
<proteinExistence type="evidence at protein level"/>
<name>NLEG8_CITRO</name>
<sequence>MPIMLNFSNGRILPESEVEALRNVARSNQSDVLLVGSRSLRLHHISFMDGFSVEPIPGSFLDRIGERRHRRLAESLERQLNGGSSFLQAFSQYIEQTSSAPPLQESVRNEVQSRVNSYAFSVNPGDFPCSVLHLSCPITLCVPETGVFVKNARCSKVCSLYDISALTEMLRRNASHPLSREAFTPGMIVHKEECNFNTTEQHFCILPRSDTRL</sequence>
<protein>
    <recommendedName>
        <fullName evidence="3">E3 ubiquitin-protein ligase NleG8</fullName>
        <ecNumber evidence="1">2.3.2.27</ecNumber>
    </recommendedName>
</protein>
<reference evidence="5" key="1">
    <citation type="journal article" date="2019" name="Microbiol. Resour. Announc.">
        <title>Complete Genome Sequence of Citrobacter rodentium Strain DBS100.</title>
        <authorList>
            <person name="Popov G."/>
            <person name="Fiebig-Comyn A."/>
            <person name="Shideler S."/>
            <person name="Coombes B.K."/>
            <person name="Savchenko A."/>
        </authorList>
    </citation>
    <scope>NUCLEOTIDE SEQUENCE [LARGE SCALE GENOMIC DNA]</scope>
    <source>
        <strain>DBS100</strain>
    </source>
</reference>
<reference key="2">
    <citation type="journal article" date="2023" name="Infect. Immun.">
        <title>Distinct Molecular Features of NleG Type 3 Secreted Effectors Allow for Different Roles during Citrobacter rodentium Infection in Mice.</title>
        <authorList>
            <person name="Popov G."/>
            <person name="Fiebig-Comyn A."/>
            <person name="Syriste L."/>
            <person name="Little D.J."/>
            <person name="Skarina T."/>
            <person name="Stogios P.J."/>
            <person name="Birstonas S."/>
            <person name="Coombes B.K."/>
            <person name="Savchenko A."/>
        </authorList>
    </citation>
    <scope>FUNCTION</scope>
    <scope>CATALYTIC ACTIVITY</scope>
    <scope>SUBUNIT</scope>
    <scope>INTERACTION WITH HOST GOPC</scope>
    <scope>SUBCELLULAR LOCATION</scope>
    <scope>INDUCTION</scope>
    <scope>DOMAIN</scope>
    <scope>DISRUPTION PHENOTYPE</scope>
    <scope>MOTIF</scope>
    <scope>MUTAGENESIS OF ILE-138 AND 210-ASP--LEU-213</scope>
    <source>
        <strain>DBS100</strain>
    </source>
</reference>
<reference key="3">
    <citation type="journal article" date="2023" name="Infect. Immun.">
        <authorList>
            <person name="Popov G."/>
            <person name="Fiebig-Comyn A."/>
            <person name="Syriste L."/>
            <person name="Little D.J."/>
            <person name="Skarina T."/>
            <person name="Stogios P.J."/>
            <person name="Birstonas S."/>
            <person name="Coombes B.K."/>
            <person name="Savchenko A."/>
        </authorList>
    </citation>
    <scope>ERRATUM OF PUBMED:36511702</scope>
</reference>
<accession>A0A482PJY4</accession>
<dbReference type="EC" id="2.3.2.27" evidence="1"/>
<dbReference type="EMBL" id="CP038008">
    <property type="protein sequence ID" value="QBY30403.1"/>
    <property type="molecule type" value="Genomic_DNA"/>
</dbReference>
<dbReference type="RefSeq" id="WP_012908051.1">
    <property type="nucleotide sequence ID" value="NZ_JXUN01000150.1"/>
</dbReference>
<dbReference type="SMR" id="A0A482PJY4"/>
<dbReference type="OMA" id="NPGDFPC"/>
<dbReference type="GO" id="GO:0004842">
    <property type="term" value="F:ubiquitin-protein transferase activity"/>
    <property type="evidence" value="ECO:0007669"/>
    <property type="project" value="InterPro"/>
</dbReference>
<dbReference type="GO" id="GO:0044403">
    <property type="term" value="P:biological process involved in symbiotic interaction"/>
    <property type="evidence" value="ECO:0007669"/>
    <property type="project" value="InterPro"/>
</dbReference>
<dbReference type="Gene3D" id="3.30.40.80">
    <property type="entry name" value="Effector protein NleG"/>
    <property type="match status" value="1"/>
</dbReference>
<dbReference type="InterPro" id="IPR010489">
    <property type="entry name" value="Effector_NleG"/>
</dbReference>
<dbReference type="InterPro" id="IPR038436">
    <property type="entry name" value="Effector_NleG_sf"/>
</dbReference>
<dbReference type="Pfam" id="PF06416">
    <property type="entry name" value="T3SS_NleG"/>
    <property type="match status" value="1"/>
</dbReference>
<feature type="chain" id="PRO_0000462551" description="E3 ubiquitin-protein ligase NleG8">
    <location>
        <begin position="1"/>
        <end position="213"/>
    </location>
</feature>
<feature type="region of interest" description="RING/U-box domain" evidence="4">
    <location>
        <begin position="136"/>
        <end position="189"/>
    </location>
</feature>
<feature type="short sequence motif" description="PDZ-binding motif" evidence="4">
    <location>
        <begin position="211"/>
        <end position="213"/>
    </location>
</feature>
<feature type="mutagenesis site" description="Loss of ubiquitin ligase activity, increases interaction with host GOPC. Does not fully complement the deletion mutant." evidence="1">
    <original>I</original>
    <variation>K</variation>
    <location>
        <position position="138"/>
    </location>
</feature>
<feature type="mutagenesis site" description="Has ubiquitin ligase activity, does not fully complement the deletion mutant. No longer interacts with host GOPC; when associated with K-138." evidence="1">
    <location>
        <begin position="210"/>
        <end position="213"/>
    </location>
</feature>
<keyword id="KW-1035">Host cytoplasm</keyword>
<keyword id="KW-0964">Secreted</keyword>
<keyword id="KW-0808">Transferase</keyword>
<keyword id="KW-0833">Ubl conjugation pathway</keyword>
<keyword id="KW-0843">Virulence</keyword>
<evidence type="ECO:0000269" key="1">
    <source>
    </source>
</evidence>
<evidence type="ECO:0000303" key="2">
    <source>
    </source>
</evidence>
<evidence type="ECO:0000305" key="3"/>
<evidence type="ECO:0000305" key="4">
    <source>
    </source>
</evidence>
<evidence type="ECO:0000312" key="5">
    <source>
        <dbReference type="EMBL" id="QBY30403.1"/>
    </source>
</evidence>
<comment type="function">
    <text evidence="1 4">Effector proteins function to alter host cell physiology and promote bacterial survival in host tissues. This protein is an E3 ubiquitin-protein ligase that probably interferes with the host's ubiquitination pathway and targets host proteins for proteasomal degradation (Probable) (PubMed:36511702). Mice infected with a strain of bacteria deleted for this gene had an increased survival rate (PubMed:36511702). Can be ubiquitinylated, and ubiquitinate ubiquitin, giving rise to polyubiquitin chains (in vitro) (PubMed:36511702).</text>
</comment>
<comment type="catalytic activity">
    <reaction evidence="1">
        <text>S-ubiquitinyl-[E2 ubiquitin-conjugating enzyme]-L-cysteine + [acceptor protein]-L-lysine = [E2 ubiquitin-conjugating enzyme]-L-cysteine + N(6)-ubiquitinyl-[acceptor protein]-L-lysine.</text>
        <dbReference type="EC" id="2.3.2.27"/>
    </reaction>
</comment>
<comment type="subunit">
    <text evidence="1">Interacts with host GOPC (human protein).</text>
</comment>
<comment type="subcellular location">
    <subcellularLocation>
        <location evidence="1">Secreted</location>
    </subcellularLocation>
    <subcellularLocation>
        <location evidence="1">Host cytoplasm</location>
    </subcellularLocation>
    <text evidence="1">Secreted by a type 3 secretion system (T3SS).</text>
</comment>
<comment type="induction">
    <text evidence="1">Transcribed for 2-5 hours after treatment that induces type 3 secretion system expression.</text>
</comment>
<comment type="domain">
    <text evidence="1">Interacts with PDZ domain of host GOPC via NleG8's C-terminal residues.</text>
</comment>
<comment type="disruption phenotype">
    <text evidence="1">Slight reduction in diarrhea in C3H/HeJ mice, no change in bacterial colonization, but higher survival rate.</text>
</comment>
<comment type="similarity">
    <text evidence="3">Belongs to the NleG E3 ligase family.</text>
</comment>
<organism>
    <name type="scientific">Citrobacter rodentium</name>
    <dbReference type="NCBI Taxonomy" id="67825"/>
    <lineage>
        <taxon>Bacteria</taxon>
        <taxon>Pseudomonadati</taxon>
        <taxon>Pseudomonadota</taxon>
        <taxon>Gammaproteobacteria</taxon>
        <taxon>Enterobacterales</taxon>
        <taxon>Enterobacteriaceae</taxon>
        <taxon>Citrobacter</taxon>
    </lineage>
</organism>